<evidence type="ECO:0000255" key="1">
    <source>
        <dbReference type="HAMAP-Rule" id="MF_00308"/>
    </source>
</evidence>
<sequence>MNEELQNQFMALDVYNQQVDKLKEELSNIDMMIMELIRSIESMESMKVSKEILLPLGAGAFVKAEAQNPEKIILSVGVDVLLEKDVDEVIVDFQKSVKELEETKELVNTQIQKTNQEIVKLRSELEKRAAAIEQRNAQMRPKTN</sequence>
<gene>
    <name evidence="1" type="primary">pfdA</name>
    <name type="ordered locus">MmarC7_0715</name>
</gene>
<dbReference type="EMBL" id="CP000745">
    <property type="protein sequence ID" value="ABR65782.1"/>
    <property type="molecule type" value="Genomic_DNA"/>
</dbReference>
<dbReference type="SMR" id="A6VH56"/>
<dbReference type="STRING" id="426368.MmarC7_0715"/>
<dbReference type="KEGG" id="mmz:MmarC7_0715"/>
<dbReference type="eggNOG" id="arCOG01341">
    <property type="taxonomic scope" value="Archaea"/>
</dbReference>
<dbReference type="HOGENOM" id="CLU_091867_1_2_2"/>
<dbReference type="OrthoDB" id="10045at2157"/>
<dbReference type="GO" id="GO:0005737">
    <property type="term" value="C:cytoplasm"/>
    <property type="evidence" value="ECO:0007669"/>
    <property type="project" value="UniProtKB-SubCell"/>
</dbReference>
<dbReference type="GO" id="GO:0016272">
    <property type="term" value="C:prefoldin complex"/>
    <property type="evidence" value="ECO:0007669"/>
    <property type="project" value="UniProtKB-UniRule"/>
</dbReference>
<dbReference type="GO" id="GO:0051082">
    <property type="term" value="F:unfolded protein binding"/>
    <property type="evidence" value="ECO:0007669"/>
    <property type="project" value="UniProtKB-UniRule"/>
</dbReference>
<dbReference type="GO" id="GO:0006457">
    <property type="term" value="P:protein folding"/>
    <property type="evidence" value="ECO:0007669"/>
    <property type="project" value="UniProtKB-UniRule"/>
</dbReference>
<dbReference type="CDD" id="cd23160">
    <property type="entry name" value="Prefoldin_alpha_GimC"/>
    <property type="match status" value="1"/>
</dbReference>
<dbReference type="Gene3D" id="1.10.287.370">
    <property type="match status" value="1"/>
</dbReference>
<dbReference type="HAMAP" id="MF_00308">
    <property type="entry name" value="PfdA"/>
    <property type="match status" value="1"/>
</dbReference>
<dbReference type="InterPro" id="IPR011599">
    <property type="entry name" value="PFD_alpha_archaea"/>
</dbReference>
<dbReference type="InterPro" id="IPR009053">
    <property type="entry name" value="Prefoldin"/>
</dbReference>
<dbReference type="InterPro" id="IPR004127">
    <property type="entry name" value="Prefoldin_subunit_alpha"/>
</dbReference>
<dbReference type="NCBIfam" id="TIGR00293">
    <property type="entry name" value="prefoldin subunit alpha"/>
    <property type="match status" value="1"/>
</dbReference>
<dbReference type="Pfam" id="PF02996">
    <property type="entry name" value="Prefoldin"/>
    <property type="match status" value="1"/>
</dbReference>
<dbReference type="SUPFAM" id="SSF46579">
    <property type="entry name" value="Prefoldin"/>
    <property type="match status" value="1"/>
</dbReference>
<name>PFDA_METM7</name>
<reference key="1">
    <citation type="submission" date="2007-06" db="EMBL/GenBank/DDBJ databases">
        <title>Complete sequence of Methanococcus maripaludis C7.</title>
        <authorList>
            <consortium name="US DOE Joint Genome Institute"/>
            <person name="Copeland A."/>
            <person name="Lucas S."/>
            <person name="Lapidus A."/>
            <person name="Barry K."/>
            <person name="Glavina del Rio T."/>
            <person name="Dalin E."/>
            <person name="Tice H."/>
            <person name="Pitluck S."/>
            <person name="Clum A."/>
            <person name="Schmutz J."/>
            <person name="Larimer F."/>
            <person name="Land M."/>
            <person name="Hauser L."/>
            <person name="Kyrpides N."/>
            <person name="Anderson I."/>
            <person name="Sieprawska-Lupa M."/>
            <person name="Whitman W.B."/>
            <person name="Richardson P."/>
        </authorList>
    </citation>
    <scope>NUCLEOTIDE SEQUENCE [LARGE SCALE GENOMIC DNA]</scope>
    <source>
        <strain>C7 / ATCC BAA-1331</strain>
    </source>
</reference>
<organism>
    <name type="scientific">Methanococcus maripaludis (strain C7 / ATCC BAA-1331)</name>
    <dbReference type="NCBI Taxonomy" id="426368"/>
    <lineage>
        <taxon>Archaea</taxon>
        <taxon>Methanobacteriati</taxon>
        <taxon>Methanobacteriota</taxon>
        <taxon>Methanomada group</taxon>
        <taxon>Methanococci</taxon>
        <taxon>Methanococcales</taxon>
        <taxon>Methanococcaceae</taxon>
        <taxon>Methanococcus</taxon>
    </lineage>
</organism>
<keyword id="KW-0143">Chaperone</keyword>
<keyword id="KW-0963">Cytoplasm</keyword>
<feature type="chain" id="PRO_1000022799" description="Prefoldin subunit alpha">
    <location>
        <begin position="1"/>
        <end position="144"/>
    </location>
</feature>
<comment type="function">
    <text evidence="1">Molecular chaperone capable of stabilizing a range of proteins. Seems to fulfill an ATP-independent, HSP70-like function in archaeal de novo protein folding.</text>
</comment>
<comment type="subunit">
    <text evidence="1">Heterohexamer of two alpha and four beta subunits.</text>
</comment>
<comment type="subcellular location">
    <subcellularLocation>
        <location evidence="1">Cytoplasm</location>
    </subcellularLocation>
</comment>
<comment type="similarity">
    <text evidence="1">Belongs to the prefoldin alpha subunit family.</text>
</comment>
<accession>A6VH56</accession>
<protein>
    <recommendedName>
        <fullName evidence="1">Prefoldin subunit alpha</fullName>
    </recommendedName>
    <alternativeName>
        <fullName evidence="1">GimC subunit alpha</fullName>
    </alternativeName>
</protein>
<proteinExistence type="inferred from homology"/>